<proteinExistence type="inferred from homology"/>
<comment type="function">
    <text evidence="1">Produces ATP from ADP in the presence of a proton gradient across the membrane.</text>
</comment>
<comment type="subunit">
    <text evidence="1">F-type ATPases have 2 components, CF(1) - the catalytic core - and CF(0) - the membrane proton channel. CF(1) has five subunits: alpha(3), beta(3), gamma(1), delta(1), epsilon(1). CF(0) has three main subunits: a, b and c.</text>
</comment>
<comment type="subcellular location">
    <subcellularLocation>
        <location evidence="1">Cellular thylakoid membrane</location>
        <topology evidence="1">Peripheral membrane protein</topology>
    </subcellularLocation>
</comment>
<comment type="similarity">
    <text evidence="1">Belongs to the ATPase epsilon chain family.</text>
</comment>
<feature type="chain" id="PRO_1000127877" description="ATP synthase epsilon chain">
    <location>
        <begin position="1"/>
        <end position="135"/>
    </location>
</feature>
<keyword id="KW-0066">ATP synthesis</keyword>
<keyword id="KW-0139">CF(1)</keyword>
<keyword id="KW-0375">Hydrogen ion transport</keyword>
<keyword id="KW-0406">Ion transport</keyword>
<keyword id="KW-0472">Membrane</keyword>
<keyword id="KW-1185">Reference proteome</keyword>
<keyword id="KW-0793">Thylakoid</keyword>
<keyword id="KW-0813">Transport</keyword>
<reference key="1">
    <citation type="journal article" date="2007" name="PLoS Genet.">
        <title>Patterns and implications of gene gain and loss in the evolution of Prochlorococcus.</title>
        <authorList>
            <person name="Kettler G.C."/>
            <person name="Martiny A.C."/>
            <person name="Huang K."/>
            <person name="Zucker J."/>
            <person name="Coleman M.L."/>
            <person name="Rodrigue S."/>
            <person name="Chen F."/>
            <person name="Lapidus A."/>
            <person name="Ferriera S."/>
            <person name="Johnson J."/>
            <person name="Steglich C."/>
            <person name="Church G.M."/>
            <person name="Richardson P."/>
            <person name="Chisholm S.W."/>
        </authorList>
    </citation>
    <scope>NUCLEOTIDE SEQUENCE [LARGE SCALE GENOMIC DNA]</scope>
    <source>
        <strain>MIT 9211</strain>
    </source>
</reference>
<evidence type="ECO:0000255" key="1">
    <source>
        <dbReference type="HAMAP-Rule" id="MF_00530"/>
    </source>
</evidence>
<organism>
    <name type="scientific">Prochlorococcus marinus (strain MIT 9211)</name>
    <dbReference type="NCBI Taxonomy" id="93059"/>
    <lineage>
        <taxon>Bacteria</taxon>
        <taxon>Bacillati</taxon>
        <taxon>Cyanobacteriota</taxon>
        <taxon>Cyanophyceae</taxon>
        <taxon>Synechococcales</taxon>
        <taxon>Prochlorococcaceae</taxon>
        <taxon>Prochlorococcus</taxon>
    </lineage>
</organism>
<name>ATPE_PROM4</name>
<sequence length="135" mass="14446">MSLTLRVLAPDKNVFDGIAEEVILPSTTGLLGILPGHISMVTAIDTGVLRVRTNGNWDSIALMGGFAEVESDEVTVLVNAAELASEINASDAESEFEQAKTEFGQLEGQENSTQKIKAKEMLNRARARVQATKSA</sequence>
<accession>A9BCC7</accession>
<protein>
    <recommendedName>
        <fullName evidence="1">ATP synthase epsilon chain</fullName>
    </recommendedName>
    <alternativeName>
        <fullName evidence="1">ATP synthase F1 sector epsilon subunit</fullName>
    </alternativeName>
    <alternativeName>
        <fullName evidence="1">F-ATPase epsilon subunit</fullName>
    </alternativeName>
</protein>
<gene>
    <name evidence="1" type="primary">atpC</name>
    <name type="ordered locus">P9211_15581</name>
</gene>
<dbReference type="EMBL" id="CP000878">
    <property type="protein sequence ID" value="ABX09489.1"/>
    <property type="molecule type" value="Genomic_DNA"/>
</dbReference>
<dbReference type="RefSeq" id="WP_012196110.1">
    <property type="nucleotide sequence ID" value="NC_009976.1"/>
</dbReference>
<dbReference type="SMR" id="A9BCC7"/>
<dbReference type="STRING" id="93059.P9211_15581"/>
<dbReference type="KEGG" id="pmj:P9211_15581"/>
<dbReference type="eggNOG" id="COG0355">
    <property type="taxonomic scope" value="Bacteria"/>
</dbReference>
<dbReference type="HOGENOM" id="CLU_084338_1_2_3"/>
<dbReference type="OrthoDB" id="9804110at2"/>
<dbReference type="Proteomes" id="UP000000788">
    <property type="component" value="Chromosome"/>
</dbReference>
<dbReference type="GO" id="GO:0031676">
    <property type="term" value="C:plasma membrane-derived thylakoid membrane"/>
    <property type="evidence" value="ECO:0007669"/>
    <property type="project" value="UniProtKB-SubCell"/>
</dbReference>
<dbReference type="GO" id="GO:0045259">
    <property type="term" value="C:proton-transporting ATP synthase complex"/>
    <property type="evidence" value="ECO:0007669"/>
    <property type="project" value="UniProtKB-KW"/>
</dbReference>
<dbReference type="GO" id="GO:0005524">
    <property type="term" value="F:ATP binding"/>
    <property type="evidence" value="ECO:0007669"/>
    <property type="project" value="UniProtKB-UniRule"/>
</dbReference>
<dbReference type="GO" id="GO:0046933">
    <property type="term" value="F:proton-transporting ATP synthase activity, rotational mechanism"/>
    <property type="evidence" value="ECO:0007669"/>
    <property type="project" value="UniProtKB-UniRule"/>
</dbReference>
<dbReference type="CDD" id="cd12152">
    <property type="entry name" value="F1-ATPase_delta"/>
    <property type="match status" value="1"/>
</dbReference>
<dbReference type="Gene3D" id="2.60.15.10">
    <property type="entry name" value="F0F1 ATP synthase delta/epsilon subunit, N-terminal"/>
    <property type="match status" value="1"/>
</dbReference>
<dbReference type="Gene3D" id="1.10.287.540">
    <property type="entry name" value="Helix hairpin bin"/>
    <property type="match status" value="1"/>
</dbReference>
<dbReference type="HAMAP" id="MF_00530">
    <property type="entry name" value="ATP_synth_epsil_bac"/>
    <property type="match status" value="1"/>
</dbReference>
<dbReference type="InterPro" id="IPR001469">
    <property type="entry name" value="ATP_synth_F1_dsu/esu"/>
</dbReference>
<dbReference type="InterPro" id="IPR020546">
    <property type="entry name" value="ATP_synth_F1_dsu/esu_N"/>
</dbReference>
<dbReference type="InterPro" id="IPR036771">
    <property type="entry name" value="ATPsynth_dsu/esu_N"/>
</dbReference>
<dbReference type="NCBIfam" id="TIGR01216">
    <property type="entry name" value="ATP_synt_epsi"/>
    <property type="match status" value="1"/>
</dbReference>
<dbReference type="PANTHER" id="PTHR13822">
    <property type="entry name" value="ATP SYNTHASE DELTA/EPSILON CHAIN"/>
    <property type="match status" value="1"/>
</dbReference>
<dbReference type="PANTHER" id="PTHR13822:SF10">
    <property type="entry name" value="ATP SYNTHASE EPSILON CHAIN, CHLOROPLASTIC"/>
    <property type="match status" value="1"/>
</dbReference>
<dbReference type="Pfam" id="PF02823">
    <property type="entry name" value="ATP-synt_DE_N"/>
    <property type="match status" value="1"/>
</dbReference>
<dbReference type="SUPFAM" id="SSF51344">
    <property type="entry name" value="Epsilon subunit of F1F0-ATP synthase N-terminal domain"/>
    <property type="match status" value="1"/>
</dbReference>